<gene>
    <name evidence="1" type="primary">pyrR</name>
    <name type="ordered locus">cbdbA1112</name>
</gene>
<evidence type="ECO:0000255" key="1">
    <source>
        <dbReference type="HAMAP-Rule" id="MF_01219"/>
    </source>
</evidence>
<keyword id="KW-0328">Glycosyltransferase</keyword>
<keyword id="KW-0804">Transcription</keyword>
<keyword id="KW-0805">Transcription regulation</keyword>
<keyword id="KW-0808">Transferase</keyword>
<proteinExistence type="inferred from homology"/>
<organism>
    <name type="scientific">Dehalococcoides mccartyi (strain CBDB1)</name>
    <dbReference type="NCBI Taxonomy" id="255470"/>
    <lineage>
        <taxon>Bacteria</taxon>
        <taxon>Bacillati</taxon>
        <taxon>Chloroflexota</taxon>
        <taxon>Dehalococcoidia</taxon>
        <taxon>Dehalococcoidales</taxon>
        <taxon>Dehalococcoidaceae</taxon>
        <taxon>Dehalococcoides</taxon>
    </lineage>
</organism>
<feature type="chain" id="PRO_1000139194" description="Bifunctional protein PyrR">
    <location>
        <begin position="1"/>
        <end position="182"/>
    </location>
</feature>
<feature type="short sequence motif" description="PRPP-binding" evidence="1">
    <location>
        <begin position="98"/>
        <end position="110"/>
    </location>
</feature>
<sequence length="182" mass="20490">MAQKVILGAEDIRRTLARIAHEILERNQSSRDLVIIGMYTRGVPLANRLAENILRFEGLEIPVGTLDFSLYRDDLDSQRFHPTIKNTDIPFSINNKIVVLVDDVLFTGRSTRAAMDALIDYGRPKAIQLAVLVDRGHRELPVRADYIGKNIPSARDEKIKVRLTETDGQDEVLILDDEAGEV</sequence>
<accession>Q3ZY75</accession>
<reference key="1">
    <citation type="journal article" date="2005" name="Nat. Biotechnol.">
        <title>Genome sequence of the chlorinated compound-respiring bacterium Dehalococcoides species strain CBDB1.</title>
        <authorList>
            <person name="Kube M."/>
            <person name="Beck A."/>
            <person name="Zinder S.H."/>
            <person name="Kuhl H."/>
            <person name="Reinhardt R."/>
            <person name="Adrian L."/>
        </authorList>
    </citation>
    <scope>NUCLEOTIDE SEQUENCE [LARGE SCALE GENOMIC DNA]</scope>
    <source>
        <strain>CBDB1</strain>
    </source>
</reference>
<comment type="function">
    <text evidence="1">Regulates the transcription of the pyrimidine nucleotide (pyr) operon in response to exogenous pyrimidines.</text>
</comment>
<comment type="function">
    <text evidence="1">Also displays a weak uracil phosphoribosyltransferase activity which is not physiologically significant.</text>
</comment>
<comment type="catalytic activity">
    <reaction evidence="1">
        <text>UMP + diphosphate = 5-phospho-alpha-D-ribose 1-diphosphate + uracil</text>
        <dbReference type="Rhea" id="RHEA:13017"/>
        <dbReference type="ChEBI" id="CHEBI:17568"/>
        <dbReference type="ChEBI" id="CHEBI:33019"/>
        <dbReference type="ChEBI" id="CHEBI:57865"/>
        <dbReference type="ChEBI" id="CHEBI:58017"/>
        <dbReference type="EC" id="2.4.2.9"/>
    </reaction>
</comment>
<comment type="similarity">
    <text evidence="1">Belongs to the purine/pyrimidine phosphoribosyltransferase family. PyrR subfamily.</text>
</comment>
<name>PYRR_DEHMC</name>
<dbReference type="EC" id="2.4.2.9" evidence="1"/>
<dbReference type="EMBL" id="AJ965256">
    <property type="protein sequence ID" value="CAI83210.1"/>
    <property type="molecule type" value="Genomic_DNA"/>
</dbReference>
<dbReference type="RefSeq" id="WP_011309561.1">
    <property type="nucleotide sequence ID" value="NC_007356.1"/>
</dbReference>
<dbReference type="SMR" id="Q3ZY75"/>
<dbReference type="KEGG" id="deh:cbdbA1112"/>
<dbReference type="HOGENOM" id="CLU_094234_2_1_0"/>
<dbReference type="Proteomes" id="UP000000433">
    <property type="component" value="Chromosome"/>
</dbReference>
<dbReference type="GO" id="GO:0004845">
    <property type="term" value="F:uracil phosphoribosyltransferase activity"/>
    <property type="evidence" value="ECO:0007669"/>
    <property type="project" value="UniProtKB-UniRule"/>
</dbReference>
<dbReference type="GO" id="GO:0006355">
    <property type="term" value="P:regulation of DNA-templated transcription"/>
    <property type="evidence" value="ECO:0007669"/>
    <property type="project" value="UniProtKB-UniRule"/>
</dbReference>
<dbReference type="CDD" id="cd06223">
    <property type="entry name" value="PRTases_typeI"/>
    <property type="match status" value="1"/>
</dbReference>
<dbReference type="FunFam" id="3.40.50.2020:FF:000020">
    <property type="entry name" value="Bifunctional protein PyrR"/>
    <property type="match status" value="1"/>
</dbReference>
<dbReference type="Gene3D" id="3.40.50.2020">
    <property type="match status" value="1"/>
</dbReference>
<dbReference type="HAMAP" id="MF_01219">
    <property type="entry name" value="PyrR"/>
    <property type="match status" value="1"/>
</dbReference>
<dbReference type="InterPro" id="IPR000836">
    <property type="entry name" value="PRibTrfase_dom"/>
</dbReference>
<dbReference type="InterPro" id="IPR029057">
    <property type="entry name" value="PRTase-like"/>
</dbReference>
<dbReference type="InterPro" id="IPR023050">
    <property type="entry name" value="PyrR"/>
</dbReference>
<dbReference type="InterPro" id="IPR050137">
    <property type="entry name" value="PyrR_bifunctional"/>
</dbReference>
<dbReference type="NCBIfam" id="NF003545">
    <property type="entry name" value="PRK05205.1-1"/>
    <property type="match status" value="1"/>
</dbReference>
<dbReference type="NCBIfam" id="NF003547">
    <property type="entry name" value="PRK05205.1-3"/>
    <property type="match status" value="1"/>
</dbReference>
<dbReference type="NCBIfam" id="NF003549">
    <property type="entry name" value="PRK05205.1-5"/>
    <property type="match status" value="1"/>
</dbReference>
<dbReference type="PANTHER" id="PTHR11608">
    <property type="entry name" value="BIFUNCTIONAL PROTEIN PYRR"/>
    <property type="match status" value="1"/>
</dbReference>
<dbReference type="PANTHER" id="PTHR11608:SF0">
    <property type="entry name" value="BIFUNCTIONAL PROTEIN PYRR"/>
    <property type="match status" value="1"/>
</dbReference>
<dbReference type="Pfam" id="PF00156">
    <property type="entry name" value="Pribosyltran"/>
    <property type="match status" value="1"/>
</dbReference>
<dbReference type="SUPFAM" id="SSF53271">
    <property type="entry name" value="PRTase-like"/>
    <property type="match status" value="1"/>
</dbReference>
<protein>
    <recommendedName>
        <fullName evidence="1">Bifunctional protein PyrR</fullName>
    </recommendedName>
    <domain>
        <recommendedName>
            <fullName evidence="1">Pyrimidine operon regulatory protein</fullName>
        </recommendedName>
    </domain>
    <domain>
        <recommendedName>
            <fullName evidence="1">Uracil phosphoribosyltransferase</fullName>
            <shortName evidence="1">UPRTase</shortName>
            <ecNumber evidence="1">2.4.2.9</ecNumber>
        </recommendedName>
    </domain>
</protein>